<feature type="chain" id="PRO_0000447438" description="Active breakpoint cluster region-related protein">
    <location>
        <begin position="1"/>
        <end position="859"/>
    </location>
</feature>
<feature type="domain" description="DH" evidence="4">
    <location>
        <begin position="91"/>
        <end position="284"/>
    </location>
</feature>
<feature type="domain" description="PH" evidence="5">
    <location>
        <begin position="301"/>
        <end position="459"/>
    </location>
</feature>
<feature type="domain" description="C2" evidence="3">
    <location>
        <begin position="484"/>
        <end position="613"/>
    </location>
</feature>
<feature type="domain" description="Rho-GAP" evidence="6">
    <location>
        <begin position="647"/>
        <end position="845"/>
    </location>
</feature>
<feature type="region of interest" description="Disordered" evidence="7">
    <location>
        <begin position="31"/>
        <end position="84"/>
    </location>
</feature>
<feature type="compositionally biased region" description="Polar residues" evidence="7">
    <location>
        <begin position="54"/>
        <end position="64"/>
    </location>
</feature>
<feature type="site" description="Arginine finger; crucial for GTP hydrolysis by stabilizing the transition state" evidence="6">
    <location>
        <position position="683"/>
    </location>
</feature>
<feature type="modified residue" description="Phosphoserine" evidence="2">
    <location>
        <position position="57"/>
    </location>
</feature>
<dbReference type="EMBL" id="AABR07030047">
    <property type="status" value="NOT_ANNOTATED_CDS"/>
    <property type="molecule type" value="Genomic_DNA"/>
</dbReference>
<dbReference type="EMBL" id="AABR07072152">
    <property type="status" value="NOT_ANNOTATED_CDS"/>
    <property type="molecule type" value="Genomic_DNA"/>
</dbReference>
<dbReference type="EMBL" id="FQ078152">
    <property type="status" value="NOT_ANNOTATED_CDS"/>
    <property type="molecule type" value="mRNA"/>
</dbReference>
<dbReference type="RefSeq" id="NP_001099284.1">
    <property type="nucleotide sequence ID" value="NM_001105814.4"/>
</dbReference>
<dbReference type="SMR" id="A0A0G2JTR4"/>
<dbReference type="FunCoup" id="A0A0G2JTR4">
    <property type="interactions" value="3222"/>
</dbReference>
<dbReference type="STRING" id="10116.ENSRNOP00000068811"/>
<dbReference type="GlyGen" id="A0A0G2JTR4">
    <property type="glycosylation" value="1 site"/>
</dbReference>
<dbReference type="iPTMnet" id="A0A0G2JTR4"/>
<dbReference type="PhosphoSitePlus" id="A0A0G2JTR4"/>
<dbReference type="jPOST" id="A0A0G2JTR4"/>
<dbReference type="PaxDb" id="10116-ENSRNOP00000038889"/>
<dbReference type="GeneID" id="287537"/>
<dbReference type="KEGG" id="rno:287537"/>
<dbReference type="AGR" id="RGD:1306279"/>
<dbReference type="CTD" id="29"/>
<dbReference type="RGD" id="1306279">
    <property type="gene designation" value="Abr"/>
</dbReference>
<dbReference type="eggNOG" id="KOG4269">
    <property type="taxonomic scope" value="Eukaryota"/>
</dbReference>
<dbReference type="InParanoid" id="A0A0G2JTR4"/>
<dbReference type="Reactome" id="R-RNO-193648">
    <property type="pathway name" value="NRAGE signals death through JNK"/>
</dbReference>
<dbReference type="Reactome" id="R-RNO-416482">
    <property type="pathway name" value="G alpha (12/13) signalling events"/>
</dbReference>
<dbReference type="Reactome" id="R-RNO-8980692">
    <property type="pathway name" value="RHOA GTPase cycle"/>
</dbReference>
<dbReference type="Reactome" id="R-RNO-9013026">
    <property type="pathway name" value="RHOB GTPase cycle"/>
</dbReference>
<dbReference type="Reactome" id="R-RNO-9013148">
    <property type="pathway name" value="CDC42 GTPase cycle"/>
</dbReference>
<dbReference type="Reactome" id="R-RNO-9013149">
    <property type="pathway name" value="RAC1 GTPase cycle"/>
</dbReference>
<dbReference type="Reactome" id="R-RNO-9013404">
    <property type="pathway name" value="RAC2 GTPase cycle"/>
</dbReference>
<dbReference type="PRO" id="PR:A0A0G2JTR4"/>
<dbReference type="Proteomes" id="UP000002494">
    <property type="component" value="Unplaced"/>
</dbReference>
<dbReference type="GO" id="GO:0030424">
    <property type="term" value="C:axon"/>
    <property type="evidence" value="ECO:0007669"/>
    <property type="project" value="UniProtKB-SubCell"/>
</dbReference>
<dbReference type="GO" id="GO:0005829">
    <property type="term" value="C:cytosol"/>
    <property type="evidence" value="ECO:0000266"/>
    <property type="project" value="RGD"/>
</dbReference>
<dbReference type="GO" id="GO:0043197">
    <property type="term" value="C:dendritic spine"/>
    <property type="evidence" value="ECO:0007669"/>
    <property type="project" value="UniProtKB-SubCell"/>
</dbReference>
<dbReference type="GO" id="GO:0098978">
    <property type="term" value="C:glutamatergic synapse"/>
    <property type="evidence" value="ECO:0000314"/>
    <property type="project" value="SynGO"/>
</dbReference>
<dbReference type="GO" id="GO:0016020">
    <property type="term" value="C:membrane"/>
    <property type="evidence" value="ECO:0000318"/>
    <property type="project" value="GO_Central"/>
</dbReference>
<dbReference type="GO" id="GO:0005886">
    <property type="term" value="C:plasma membrane"/>
    <property type="evidence" value="ECO:0000266"/>
    <property type="project" value="RGD"/>
</dbReference>
<dbReference type="GO" id="GO:0099092">
    <property type="term" value="C:postsynaptic density, intracellular component"/>
    <property type="evidence" value="ECO:0000314"/>
    <property type="project" value="SynGO"/>
</dbReference>
<dbReference type="GO" id="GO:0098685">
    <property type="term" value="C:Schaffer collateral - CA1 synapse"/>
    <property type="evidence" value="ECO:0000250"/>
    <property type="project" value="UniProtKB"/>
</dbReference>
<dbReference type="GO" id="GO:0005096">
    <property type="term" value="F:GTPase activator activity"/>
    <property type="evidence" value="ECO:0000266"/>
    <property type="project" value="RGD"/>
</dbReference>
<dbReference type="GO" id="GO:0005085">
    <property type="term" value="F:guanyl-nucleotide exchange factor activity"/>
    <property type="evidence" value="ECO:0000266"/>
    <property type="project" value="RGD"/>
</dbReference>
<dbReference type="GO" id="GO:0030036">
    <property type="term" value="P:actin cytoskeleton organization"/>
    <property type="evidence" value="ECO:0000266"/>
    <property type="project" value="RGD"/>
</dbReference>
<dbReference type="GO" id="GO:0007420">
    <property type="term" value="P:brain development"/>
    <property type="evidence" value="ECO:0000266"/>
    <property type="project" value="RGD"/>
</dbReference>
<dbReference type="GO" id="GO:0016477">
    <property type="term" value="P:cell migration"/>
    <property type="evidence" value="ECO:0000266"/>
    <property type="project" value="RGD"/>
</dbReference>
<dbReference type="GO" id="GO:0051649">
    <property type="term" value="P:establishment of localization in cell"/>
    <property type="evidence" value="ECO:0000266"/>
    <property type="project" value="RGD"/>
</dbReference>
<dbReference type="GO" id="GO:0042472">
    <property type="term" value="P:inner ear morphogenesis"/>
    <property type="evidence" value="ECO:0000266"/>
    <property type="project" value="RGD"/>
</dbReference>
<dbReference type="GO" id="GO:0035556">
    <property type="term" value="P:intracellular signal transduction"/>
    <property type="evidence" value="ECO:0007669"/>
    <property type="project" value="InterPro"/>
</dbReference>
<dbReference type="GO" id="GO:1905517">
    <property type="term" value="P:macrophage migration"/>
    <property type="evidence" value="ECO:0000266"/>
    <property type="project" value="RGD"/>
</dbReference>
<dbReference type="GO" id="GO:0050804">
    <property type="term" value="P:modulation of chemical synaptic transmission"/>
    <property type="evidence" value="ECO:0000250"/>
    <property type="project" value="UniProtKB"/>
</dbReference>
<dbReference type="GO" id="GO:0060313">
    <property type="term" value="P:negative regulation of blood vessel remodeling"/>
    <property type="evidence" value="ECO:0000266"/>
    <property type="project" value="RGD"/>
</dbReference>
<dbReference type="GO" id="GO:0002692">
    <property type="term" value="P:negative regulation of cellular extravasation"/>
    <property type="evidence" value="ECO:0000266"/>
    <property type="project" value="RGD"/>
</dbReference>
<dbReference type="GO" id="GO:0050728">
    <property type="term" value="P:negative regulation of inflammatory response"/>
    <property type="evidence" value="ECO:0000266"/>
    <property type="project" value="RGD"/>
</dbReference>
<dbReference type="GO" id="GO:1905522">
    <property type="term" value="P:negative regulation of macrophage migration"/>
    <property type="evidence" value="ECO:0000266"/>
    <property type="project" value="RGD"/>
</dbReference>
<dbReference type="GO" id="GO:0043314">
    <property type="term" value="P:negative regulation of neutrophil degranulation"/>
    <property type="evidence" value="ECO:0000266"/>
    <property type="project" value="RGD"/>
</dbReference>
<dbReference type="GO" id="GO:0050885">
    <property type="term" value="P:neuromuscular process controlling balance"/>
    <property type="evidence" value="ECO:0000266"/>
    <property type="project" value="RGD"/>
</dbReference>
<dbReference type="GO" id="GO:0043312">
    <property type="term" value="P:neutrophil degranulation"/>
    <property type="evidence" value="ECO:0000266"/>
    <property type="project" value="RGD"/>
</dbReference>
<dbReference type="GO" id="GO:0006909">
    <property type="term" value="P:phagocytosis"/>
    <property type="evidence" value="ECO:0000266"/>
    <property type="project" value="RGD"/>
</dbReference>
<dbReference type="GO" id="GO:0050766">
    <property type="term" value="P:positive regulation of phagocytosis"/>
    <property type="evidence" value="ECO:0000266"/>
    <property type="project" value="RGD"/>
</dbReference>
<dbReference type="GO" id="GO:0043114">
    <property type="term" value="P:regulation of vascular permeability"/>
    <property type="evidence" value="ECO:0000266"/>
    <property type="project" value="RGD"/>
</dbReference>
<dbReference type="GO" id="GO:0032496">
    <property type="term" value="P:response to lipopolysaccharide"/>
    <property type="evidence" value="ECO:0000266"/>
    <property type="project" value="RGD"/>
</dbReference>
<dbReference type="CDD" id="cd08686">
    <property type="entry name" value="C2_ABR"/>
    <property type="match status" value="1"/>
</dbReference>
<dbReference type="CDD" id="cd13366">
    <property type="entry name" value="PH_ABR"/>
    <property type="match status" value="1"/>
</dbReference>
<dbReference type="CDD" id="cd04387">
    <property type="entry name" value="RhoGAP_Bcr"/>
    <property type="match status" value="1"/>
</dbReference>
<dbReference type="CDD" id="cd00160">
    <property type="entry name" value="RhoGEF"/>
    <property type="match status" value="1"/>
</dbReference>
<dbReference type="FunFam" id="2.60.40.150:FF:000057">
    <property type="entry name" value="active breakpoint cluster region-related protein isoform X1"/>
    <property type="match status" value="1"/>
</dbReference>
<dbReference type="FunFam" id="1.20.900.10:FF:000014">
    <property type="entry name" value="active breakpoint cluster region-related protein isoform X2"/>
    <property type="match status" value="1"/>
</dbReference>
<dbReference type="FunFam" id="2.30.29.30:FF:000112">
    <property type="entry name" value="active breakpoint cluster region-related protein isoform X2"/>
    <property type="match status" value="1"/>
</dbReference>
<dbReference type="FunFam" id="1.10.555.10:FF:000004">
    <property type="entry name" value="active breakpoint cluster region-related protein-like"/>
    <property type="match status" value="1"/>
</dbReference>
<dbReference type="Gene3D" id="2.60.40.150">
    <property type="entry name" value="C2 domain"/>
    <property type="match status" value="1"/>
</dbReference>
<dbReference type="Gene3D" id="1.20.900.10">
    <property type="entry name" value="Dbl homology (DH) domain"/>
    <property type="match status" value="1"/>
</dbReference>
<dbReference type="Gene3D" id="2.30.29.30">
    <property type="entry name" value="Pleckstrin-homology domain (PH domain)/Phosphotyrosine-binding domain (PTB)"/>
    <property type="match status" value="1"/>
</dbReference>
<dbReference type="Gene3D" id="1.10.555.10">
    <property type="entry name" value="Rho GTPase activation protein"/>
    <property type="match status" value="1"/>
</dbReference>
<dbReference type="InterPro" id="IPR037769">
    <property type="entry name" value="Abr/Bcr"/>
</dbReference>
<dbReference type="InterPro" id="IPR037865">
    <property type="entry name" value="ABR_PH"/>
</dbReference>
<dbReference type="InterPro" id="IPR000008">
    <property type="entry name" value="C2_dom"/>
</dbReference>
<dbReference type="InterPro" id="IPR035892">
    <property type="entry name" value="C2_domain_sf"/>
</dbReference>
<dbReference type="InterPro" id="IPR035899">
    <property type="entry name" value="DBL_dom_sf"/>
</dbReference>
<dbReference type="InterPro" id="IPR000219">
    <property type="entry name" value="DH_dom"/>
</dbReference>
<dbReference type="InterPro" id="IPR001331">
    <property type="entry name" value="GDS_CDC24_CS"/>
</dbReference>
<dbReference type="InterPro" id="IPR011993">
    <property type="entry name" value="PH-like_dom_sf"/>
</dbReference>
<dbReference type="InterPro" id="IPR001849">
    <property type="entry name" value="PH_domain"/>
</dbReference>
<dbReference type="InterPro" id="IPR008936">
    <property type="entry name" value="Rho_GTPase_activation_prot"/>
</dbReference>
<dbReference type="InterPro" id="IPR000198">
    <property type="entry name" value="RhoGAP_dom"/>
</dbReference>
<dbReference type="PANTHER" id="PTHR23182:SF5">
    <property type="entry name" value="ACTIVE BREAKPOINT CLUSTER REGION-RELATED PROTEIN"/>
    <property type="match status" value="1"/>
</dbReference>
<dbReference type="PANTHER" id="PTHR23182">
    <property type="entry name" value="BREAKPOINT CLUSTER REGION PROTEIN BCR"/>
    <property type="match status" value="1"/>
</dbReference>
<dbReference type="Pfam" id="PF00168">
    <property type="entry name" value="C2"/>
    <property type="match status" value="1"/>
</dbReference>
<dbReference type="Pfam" id="PF19057">
    <property type="entry name" value="PH_19"/>
    <property type="match status" value="1"/>
</dbReference>
<dbReference type="Pfam" id="PF00620">
    <property type="entry name" value="RhoGAP"/>
    <property type="match status" value="1"/>
</dbReference>
<dbReference type="Pfam" id="PF00621">
    <property type="entry name" value="RhoGEF"/>
    <property type="match status" value="1"/>
</dbReference>
<dbReference type="SMART" id="SM00239">
    <property type="entry name" value="C2"/>
    <property type="match status" value="1"/>
</dbReference>
<dbReference type="SMART" id="SM00233">
    <property type="entry name" value="PH"/>
    <property type="match status" value="1"/>
</dbReference>
<dbReference type="SMART" id="SM00324">
    <property type="entry name" value="RhoGAP"/>
    <property type="match status" value="1"/>
</dbReference>
<dbReference type="SMART" id="SM00325">
    <property type="entry name" value="RhoGEF"/>
    <property type="match status" value="1"/>
</dbReference>
<dbReference type="SUPFAM" id="SSF49562">
    <property type="entry name" value="C2 domain (Calcium/lipid-binding domain, CaLB)"/>
    <property type="match status" value="1"/>
</dbReference>
<dbReference type="SUPFAM" id="SSF48065">
    <property type="entry name" value="DBL homology domain (DH-domain)"/>
    <property type="match status" value="1"/>
</dbReference>
<dbReference type="SUPFAM" id="SSF48350">
    <property type="entry name" value="GTPase activation domain, GAP"/>
    <property type="match status" value="1"/>
</dbReference>
<dbReference type="SUPFAM" id="SSF50729">
    <property type="entry name" value="PH domain-like"/>
    <property type="match status" value="1"/>
</dbReference>
<dbReference type="PROSITE" id="PS50004">
    <property type="entry name" value="C2"/>
    <property type="match status" value="1"/>
</dbReference>
<dbReference type="PROSITE" id="PS00741">
    <property type="entry name" value="DH_1"/>
    <property type="match status" value="1"/>
</dbReference>
<dbReference type="PROSITE" id="PS50010">
    <property type="entry name" value="DH_2"/>
    <property type="match status" value="1"/>
</dbReference>
<dbReference type="PROSITE" id="PS50003">
    <property type="entry name" value="PH_DOMAIN"/>
    <property type="match status" value="1"/>
</dbReference>
<dbReference type="PROSITE" id="PS50238">
    <property type="entry name" value="RHOGAP"/>
    <property type="match status" value="1"/>
</dbReference>
<gene>
    <name evidence="11" type="primary">Abr</name>
</gene>
<comment type="function">
    <text evidence="1 2">Protein with a unique structure having two opposing regulatory activities toward small GTP-binding proteins. The C-terminus is a GTPase-activating protein domain which stimulates GTP hydrolysis by RAC1, RAC2 and CDC42. Accelerates the intrinsic rate of GTP hydrolysis of RAC1 or CDC42, leading to down-regulation of the active GTP-bound form. The central Dbl homology (DH) domain functions as guanine nucleotide exchange factor (GEF) that modulates the GTPases CDC42, RHOA and RAC1. Promotes the conversion of CDC42, RHOA and RAC1 from the GDP-bound to the GTP-bound form (By similarity). Functions as an important negative regulator of neuronal RAC1 activity (By similarity). Regulates macrophage functions such as CSF-1 directed motility and phagocytosis through the modulation of RAC1 activity (By similarity).</text>
</comment>
<comment type="subunit">
    <text evidence="8">Interacts with DLG4.</text>
</comment>
<comment type="subcellular location">
    <subcellularLocation>
        <location evidence="2">Cell projection</location>
        <location evidence="2">Dendritic spine</location>
    </subcellularLocation>
    <subcellularLocation>
        <location evidence="2">Cell projection</location>
        <location evidence="2">Axon</location>
    </subcellularLocation>
    <subcellularLocation>
        <location evidence="8">Synapse</location>
    </subcellularLocation>
</comment>
<comment type="tissue specificity">
    <text evidence="8">Expressed in brain, including the cortex, hippocampus, cerebellum, and brainstem, as well as the spinal cord (at protein level).</text>
</comment>
<comment type="developmental stage">
    <text evidence="8">Expression gradually increases from late embryonic (18 dpc) stage until adulthood.</text>
</comment>
<comment type="domain">
    <text evidence="1">The central Dbl homology (DH) domain functions as a guanine nucleotide exchange factor (GEF) that modulates the GTPases CDC42, RHOA and RAC1. Promotes the conversion of CDC42, RHOA and RAC1 from the GDP-bound to the GTP-bound form. The C-terminus is a Rho-GAP domain which stimulates GTP hydrolysis by RAC1, RAC2 and CDC42. The protein has a unique structure having two opposing regulatory activities toward small GTP-binding proteins.</text>
</comment>
<proteinExistence type="evidence at protein level"/>
<keyword id="KW-0966">Cell projection</keyword>
<keyword id="KW-0175">Coiled coil</keyword>
<keyword id="KW-0343">GTPase activation</keyword>
<keyword id="KW-0344">Guanine-nucleotide releasing factor</keyword>
<keyword id="KW-0597">Phosphoprotein</keyword>
<keyword id="KW-1185">Reference proteome</keyword>
<keyword id="KW-0770">Synapse</keyword>
<protein>
    <recommendedName>
        <fullName evidence="9">Active breakpoint cluster region-related protein</fullName>
    </recommendedName>
</protein>
<accession>A0A0G2JTR4</accession>
<organism>
    <name type="scientific">Rattus norvegicus</name>
    <name type="common">Rat</name>
    <dbReference type="NCBI Taxonomy" id="10116"/>
    <lineage>
        <taxon>Eukaryota</taxon>
        <taxon>Metazoa</taxon>
        <taxon>Chordata</taxon>
        <taxon>Craniata</taxon>
        <taxon>Vertebrata</taxon>
        <taxon>Euteleostomi</taxon>
        <taxon>Mammalia</taxon>
        <taxon>Eutheria</taxon>
        <taxon>Euarchontoglires</taxon>
        <taxon>Glires</taxon>
        <taxon>Rodentia</taxon>
        <taxon>Myomorpha</taxon>
        <taxon>Muroidea</taxon>
        <taxon>Muridae</taxon>
        <taxon>Murinae</taxon>
        <taxon>Rattus</taxon>
    </lineage>
</organism>
<name>ABR_RAT</name>
<reference evidence="10" key="1">
    <citation type="journal article" date="2004" name="Nature">
        <title>Genome sequence of the Brown Norway rat yields insights into mammalian evolution.</title>
        <authorList>
            <person name="Gibbs R.A."/>
            <person name="Weinstock G.M."/>
            <person name="Metzker M.L."/>
            <person name="Muzny D.M."/>
            <person name="Sodergren E.J."/>
            <person name="Scherer S."/>
            <person name="Scott G."/>
            <person name="Steffen D."/>
            <person name="Worley K.C."/>
            <person name="Burch P.E."/>
            <person name="Okwuonu G."/>
            <person name="Hines S."/>
            <person name="Lewis L."/>
            <person name="Deramo C."/>
            <person name="Delgado O."/>
            <person name="Dugan-Rocha S."/>
            <person name="Miner G."/>
            <person name="Morgan M."/>
            <person name="Hawes A."/>
            <person name="Gill R."/>
            <person name="Holt R.A."/>
            <person name="Adams M.D."/>
            <person name="Amanatides P.G."/>
            <person name="Baden-Tillson H."/>
            <person name="Barnstead M."/>
            <person name="Chin S."/>
            <person name="Evans C.A."/>
            <person name="Ferriera S."/>
            <person name="Fosler C."/>
            <person name="Glodek A."/>
            <person name="Gu Z."/>
            <person name="Jennings D."/>
            <person name="Kraft C.L."/>
            <person name="Nguyen T."/>
            <person name="Pfannkoch C.M."/>
            <person name="Sitter C."/>
            <person name="Sutton G.G."/>
            <person name="Venter J.C."/>
            <person name="Woodage T."/>
            <person name="Smith D."/>
            <person name="Lee H.-M."/>
            <person name="Gustafson E."/>
            <person name="Cahill P."/>
            <person name="Kana A."/>
            <person name="Doucette-Stamm L."/>
            <person name="Weinstock K."/>
            <person name="Fechtel K."/>
            <person name="Weiss R.B."/>
            <person name="Dunn D.M."/>
            <person name="Green E.D."/>
            <person name="Blakesley R.W."/>
            <person name="Bouffard G.G."/>
            <person name="De Jong P.J."/>
            <person name="Osoegawa K."/>
            <person name="Zhu B."/>
            <person name="Marra M."/>
            <person name="Schein J."/>
            <person name="Bosdet I."/>
            <person name="Fjell C."/>
            <person name="Jones S."/>
            <person name="Krzywinski M."/>
            <person name="Mathewson C."/>
            <person name="Siddiqui A."/>
            <person name="Wye N."/>
            <person name="McPherson J."/>
            <person name="Zhao S."/>
            <person name="Fraser C.M."/>
            <person name="Shetty J."/>
            <person name="Shatsman S."/>
            <person name="Geer K."/>
            <person name="Chen Y."/>
            <person name="Abramzon S."/>
            <person name="Nierman W.C."/>
            <person name="Havlak P.H."/>
            <person name="Chen R."/>
            <person name="Durbin K.J."/>
            <person name="Egan A."/>
            <person name="Ren Y."/>
            <person name="Song X.-Z."/>
            <person name="Li B."/>
            <person name="Liu Y."/>
            <person name="Qin X."/>
            <person name="Cawley S."/>
            <person name="Cooney A.J."/>
            <person name="D'Souza L.M."/>
            <person name="Martin K."/>
            <person name="Wu J.Q."/>
            <person name="Gonzalez-Garay M.L."/>
            <person name="Jackson A.R."/>
            <person name="Kalafus K.J."/>
            <person name="McLeod M.P."/>
            <person name="Milosavljevic A."/>
            <person name="Virk D."/>
            <person name="Volkov A."/>
            <person name="Wheeler D.A."/>
            <person name="Zhang Z."/>
            <person name="Bailey J.A."/>
            <person name="Eichler E.E."/>
            <person name="Tuzun E."/>
            <person name="Birney E."/>
            <person name="Mongin E."/>
            <person name="Ureta-Vidal A."/>
            <person name="Woodwark C."/>
            <person name="Zdobnov E."/>
            <person name="Bork P."/>
            <person name="Suyama M."/>
            <person name="Torrents D."/>
            <person name="Alexandersson M."/>
            <person name="Trask B.J."/>
            <person name="Young J.M."/>
            <person name="Huang H."/>
            <person name="Wang H."/>
            <person name="Xing H."/>
            <person name="Daniels S."/>
            <person name="Gietzen D."/>
            <person name="Schmidt J."/>
            <person name="Stevens K."/>
            <person name="Vitt U."/>
            <person name="Wingrove J."/>
            <person name="Camara F."/>
            <person name="Mar Alba M."/>
            <person name="Abril J.F."/>
            <person name="Guigo R."/>
            <person name="Smit A."/>
            <person name="Dubchak I."/>
            <person name="Rubin E.M."/>
            <person name="Couronne O."/>
            <person name="Poliakov A."/>
            <person name="Huebner N."/>
            <person name="Ganten D."/>
            <person name="Goesele C."/>
            <person name="Hummel O."/>
            <person name="Kreitler T."/>
            <person name="Lee Y.-A."/>
            <person name="Monti J."/>
            <person name="Schulz H."/>
            <person name="Zimdahl H."/>
            <person name="Himmelbauer H."/>
            <person name="Lehrach H."/>
            <person name="Jacob H.J."/>
            <person name="Bromberg S."/>
            <person name="Gullings-Handley J."/>
            <person name="Jensen-Seaman M.I."/>
            <person name="Kwitek A.E."/>
            <person name="Lazar J."/>
            <person name="Pasko D."/>
            <person name="Tonellato P.J."/>
            <person name="Twigger S."/>
            <person name="Ponting C.P."/>
            <person name="Duarte J.M."/>
            <person name="Rice S."/>
            <person name="Goodstadt L."/>
            <person name="Beatson S.A."/>
            <person name="Emes R.D."/>
            <person name="Winter E.E."/>
            <person name="Webber C."/>
            <person name="Brandt P."/>
            <person name="Nyakatura G."/>
            <person name="Adetobi M."/>
            <person name="Chiaromonte F."/>
            <person name="Elnitski L."/>
            <person name="Eswara P."/>
            <person name="Hardison R.C."/>
            <person name="Hou M."/>
            <person name="Kolbe D."/>
            <person name="Makova K."/>
            <person name="Miller W."/>
            <person name="Nekrutenko A."/>
            <person name="Riemer C."/>
            <person name="Schwartz S."/>
            <person name="Taylor J."/>
            <person name="Yang S."/>
            <person name="Zhang Y."/>
            <person name="Lindpaintner K."/>
            <person name="Andrews T.D."/>
            <person name="Caccamo M."/>
            <person name="Clamp M."/>
            <person name="Clarke L."/>
            <person name="Curwen V."/>
            <person name="Durbin R.M."/>
            <person name="Eyras E."/>
            <person name="Searle S.M."/>
            <person name="Cooper G.M."/>
            <person name="Batzoglou S."/>
            <person name="Brudno M."/>
            <person name="Sidow A."/>
            <person name="Stone E.A."/>
            <person name="Payseur B.A."/>
            <person name="Bourque G."/>
            <person name="Lopez-Otin C."/>
            <person name="Puente X.S."/>
            <person name="Chakrabarti K."/>
            <person name="Chatterji S."/>
            <person name="Dewey C."/>
            <person name="Pachter L."/>
            <person name="Bray N."/>
            <person name="Yap V.B."/>
            <person name="Caspi A."/>
            <person name="Tesler G."/>
            <person name="Pevzner P.A."/>
            <person name="Haussler D."/>
            <person name="Roskin K.M."/>
            <person name="Baertsch R."/>
            <person name="Clawson H."/>
            <person name="Furey T.S."/>
            <person name="Hinrichs A.S."/>
            <person name="Karolchik D."/>
            <person name="Kent W.J."/>
            <person name="Rosenbloom K.R."/>
            <person name="Trumbower H."/>
            <person name="Weirauch M."/>
            <person name="Cooper D.N."/>
            <person name="Stenson P.D."/>
            <person name="Ma B."/>
            <person name="Brent M."/>
            <person name="Arumugam M."/>
            <person name="Shteynberg D."/>
            <person name="Copley R.R."/>
            <person name="Taylor M.S."/>
            <person name="Riethman H."/>
            <person name="Mudunuri U."/>
            <person name="Peterson J."/>
            <person name="Guyer M."/>
            <person name="Felsenfeld A."/>
            <person name="Old S."/>
            <person name="Mockrin S."/>
            <person name="Collins F.S."/>
        </authorList>
    </citation>
    <scope>NUCLEOTIDE SEQUENCE [LARGE SCALE GENOMIC DNA]</scope>
    <source>
        <strain evidence="10">Brown Norway</strain>
    </source>
</reference>
<reference key="2">
    <citation type="journal article" date="2010" name="J. Neurosci.">
        <title>Regulation of synaptic Rac1 activity, long-term potentiation maintenance, and learning and memory by BCR and ABR Rac GTPase-activating proteins.</title>
        <authorList>
            <person name="Oh D."/>
            <person name="Han S."/>
            <person name="Seo J."/>
            <person name="Lee J.R."/>
            <person name="Choi J."/>
            <person name="Groffen J."/>
            <person name="Kim K."/>
            <person name="Cho Y.S."/>
            <person name="Choi H.S."/>
            <person name="Shin H."/>
            <person name="Woo J."/>
            <person name="Won H."/>
            <person name="Park S.K."/>
            <person name="Kim S.Y."/>
            <person name="Jo J."/>
            <person name="Whitcomb D.J."/>
            <person name="Cho K."/>
            <person name="Kim H."/>
            <person name="Bae Y.C."/>
            <person name="Heisterkamp N."/>
            <person name="Choi S.Y."/>
            <person name="Kim E."/>
        </authorList>
    </citation>
    <scope>INTERACTION WITH DLG4</scope>
    <scope>TISSUE SPECIFICITY</scope>
    <scope>SUBCELLULAR LOCATION</scope>
</reference>
<reference evidence="12" key="3">
    <citation type="journal article" date="2012" name="Nat. Commun.">
        <title>Quantitative maps of protein phosphorylation sites across 14 different rat organs and tissues.</title>
        <authorList>
            <person name="Lundby A."/>
            <person name="Secher A."/>
            <person name="Lage K."/>
            <person name="Nordsborg N.B."/>
            <person name="Dmytriyev A."/>
            <person name="Lundby C."/>
            <person name="Olsen J.V."/>
        </authorList>
    </citation>
    <scope>IDENTIFICATION BY MASS SPECTROMETRY [LARGE SCALE ANALYSIS]</scope>
</reference>
<sequence length="859" mass="97693">MEPLSHRGLPRLSWIDTLYSNFSYGAEDYDAEGHEEQKGPPEGSETMPYIDESPTMSPQLSARSQGGGESISPTPPEGLAPGVEAGKGLEMRKLVLSGFLASEEIYINQLEALLLPMKPLKATATTSQPVLTIQQIETIFYKIQDIYEIHKEFYDNLCPKVQQWDSQVTMGHLFQKLASQLGVYKAFVDNYKVALETAEKCSQSNNQFQKISEELKVKGPKDSKDSHTSVTMEALLYKPIDRVTRSTLVLHDLLKHTPVDHPDYPLLQDALRISQNFLSSINEDIDPRRTAVTTPKGETRQLVKDGFLVEMSESSRKLRHVFLFTDVLLCAKLKKTSAGKHQQYDCKWYIPLADLVFPSPEESEASPQVHPFPDHELEDMKVKISALKSEIQKEKANKGQSRAIERLKKKMFENEFLLLLNSPTIPFRIHNRNGKSYLFLLSSDYERSEWREAIQKLQKKDLQAFVLSSVELQVLTGSCFKLRTVHNIPVTSNKDDDESPGLYGFLHVIVHSAKGFKQSANLYCTLEVDSFGYFVSKAKTRVFRDTTEPKWDEEFEIELEGSQSLRILCYEKCYDKTKVNKDNNEIVDKIMGKGQIQLDPQTVESKNWHTDVIEMNGIKVEFSMKFTSRDMSLKRTPSKKQTGVFGVKISVVTKRERSKVPYIVRQCIEEVEKRGIEEVGIYRISGVATDIQALKAVFDANNKDILLMLSDMDINAIAGTLKLYFRELPEPLLTDRLYPAFMEGIALSDPAAKENCMMHLLRSLPDPNLITFLFLLEHLKRVAEKEPINKMSLHNLATVFGPTLLRPSEVESKAHLTSAADIWSHDVMAQVQVLLYYLQHPPISFAELKRNTLYFSTDV</sequence>
<evidence type="ECO:0000250" key="1">
    <source>
        <dbReference type="UniProtKB" id="Q12979"/>
    </source>
</evidence>
<evidence type="ECO:0000250" key="2">
    <source>
        <dbReference type="UniProtKB" id="Q5SSL4"/>
    </source>
</evidence>
<evidence type="ECO:0000255" key="3">
    <source>
        <dbReference type="PROSITE-ProRule" id="PRU00041"/>
    </source>
</evidence>
<evidence type="ECO:0000255" key="4">
    <source>
        <dbReference type="PROSITE-ProRule" id="PRU00062"/>
    </source>
</evidence>
<evidence type="ECO:0000255" key="5">
    <source>
        <dbReference type="PROSITE-ProRule" id="PRU00145"/>
    </source>
</evidence>
<evidence type="ECO:0000255" key="6">
    <source>
        <dbReference type="PROSITE-ProRule" id="PRU00172"/>
    </source>
</evidence>
<evidence type="ECO:0000256" key="7">
    <source>
        <dbReference type="SAM" id="MobiDB-lite"/>
    </source>
</evidence>
<evidence type="ECO:0000269" key="8">
    <source>
    </source>
</evidence>
<evidence type="ECO:0000305" key="9"/>
<evidence type="ECO:0000312" key="10">
    <source>
        <dbReference type="Proteomes" id="UP000002494"/>
    </source>
</evidence>
<evidence type="ECO:0000312" key="11">
    <source>
        <dbReference type="RGD" id="1306279"/>
    </source>
</evidence>
<evidence type="ECO:0007744" key="12">
    <source>
    </source>
</evidence>